<name>SYL_BURCM</name>
<comment type="catalytic activity">
    <reaction evidence="1">
        <text>tRNA(Leu) + L-leucine + ATP = L-leucyl-tRNA(Leu) + AMP + diphosphate</text>
        <dbReference type="Rhea" id="RHEA:11688"/>
        <dbReference type="Rhea" id="RHEA-COMP:9613"/>
        <dbReference type="Rhea" id="RHEA-COMP:9622"/>
        <dbReference type="ChEBI" id="CHEBI:30616"/>
        <dbReference type="ChEBI" id="CHEBI:33019"/>
        <dbReference type="ChEBI" id="CHEBI:57427"/>
        <dbReference type="ChEBI" id="CHEBI:78442"/>
        <dbReference type="ChEBI" id="CHEBI:78494"/>
        <dbReference type="ChEBI" id="CHEBI:456215"/>
        <dbReference type="EC" id="6.1.1.4"/>
    </reaction>
</comment>
<comment type="subcellular location">
    <subcellularLocation>
        <location evidence="1">Cytoplasm</location>
    </subcellularLocation>
</comment>
<comment type="similarity">
    <text evidence="1">Belongs to the class-I aminoacyl-tRNA synthetase family.</text>
</comment>
<reference key="1">
    <citation type="submission" date="2006-08" db="EMBL/GenBank/DDBJ databases">
        <title>Complete sequence of chromosome 1 of Burkholderia cepacia AMMD.</title>
        <authorList>
            <person name="Copeland A."/>
            <person name="Lucas S."/>
            <person name="Lapidus A."/>
            <person name="Barry K."/>
            <person name="Detter J.C."/>
            <person name="Glavina del Rio T."/>
            <person name="Hammon N."/>
            <person name="Israni S."/>
            <person name="Pitluck S."/>
            <person name="Bruce D."/>
            <person name="Chain P."/>
            <person name="Malfatti S."/>
            <person name="Shin M."/>
            <person name="Vergez L."/>
            <person name="Schmutz J."/>
            <person name="Larimer F."/>
            <person name="Land M."/>
            <person name="Hauser L."/>
            <person name="Kyrpides N."/>
            <person name="Kim E."/>
            <person name="Parke J."/>
            <person name="Coenye T."/>
            <person name="Konstantinidis K."/>
            <person name="Ramette A."/>
            <person name="Tiedje J."/>
            <person name="Richardson P."/>
        </authorList>
    </citation>
    <scope>NUCLEOTIDE SEQUENCE [LARGE SCALE GENOMIC DNA]</scope>
    <source>
        <strain>ATCC BAA-244 / DSM 16087 / CCUG 44356 / LMG 19182 / AMMD</strain>
    </source>
</reference>
<protein>
    <recommendedName>
        <fullName evidence="1">Leucine--tRNA ligase</fullName>
        <ecNumber evidence="1">6.1.1.4</ecNumber>
    </recommendedName>
    <alternativeName>
        <fullName evidence="1">Leucyl-tRNA synthetase</fullName>
        <shortName evidence="1">LeuRS</shortName>
    </alternativeName>
</protein>
<sequence length="864" mass="95922">MHERYVPADVEAAAQGDWRAADAYKTREDSQKPKFYCVSMLPYPSGKLHMGHVRNYTINDVMYRYLRMNGYNTLMPMGWDAFGMPAENAAMANGVPPAKWTYDNIDYMKGQMQSMGLAIDWSREIATCKPDYYKWNQWLFLKMLEKGIAYKKTGTVNWDPVDQTVLANEQVIDGRGWRSGALVEKREIPMYYLRITQYADELLNDLDGLGWPERVKIMQQNWIGKSFGVNFGFPYELDGEKALLRVFTTRADTILGVTFCAVAAEHPLATRLAQGKPELQAFIDECKRGGVAEADVATMEKKGVATGFSVSHPLTGEPVEVWIGNYVLMSYGEGAVMGVPGHDERDFAFAKKYGLPIKQVIASEGQTYSLDAWQEWYGDKETAVCVNSGKYDGLRYADAVDAVAADLKAGGYGDKQVTWRLRDWGVSRQRYWGTPIPIIHCPSCGDVPVPEQDLPVVLPEDLVPDGSGNPLAKSEAFLNCSCPKCGAAAKRETDTMDTFVDSSWYFSRYTAPDADTMVDARTDYWMPMDQYIGGIEHAILHLLYSRFWTKVMRDLGLVKFGEPAKNLLTQGMVLNETFYREDASGKKTWYNPADVTVTHDDKGRPVGATLNTDGQPVVLGGIEKMSKSKNNGVDPQVLIDQYGADTARLFTMFAAPPEQQLEWSGAGVEGASRFLRRVWSFGATNREALATRAGFDAAALGDADKALRREIYSVLKQADFDYQRLQYNTVVSAAMKMLNAIDGAKGATPAVLRETYGVLLRVLYPVVPHVTFELWKALGYADEFGPLLDAPWPKVDEAALEQAEIELVLQVNGKVRGALKVAKDASREAIEAAAVADEAFAKFSDGKPAKKIVVVPGRLVNIVV</sequence>
<proteinExistence type="inferred from homology"/>
<dbReference type="EC" id="6.1.1.4" evidence="1"/>
<dbReference type="EMBL" id="CP000440">
    <property type="protein sequence ID" value="ABI86108.1"/>
    <property type="molecule type" value="Genomic_DNA"/>
</dbReference>
<dbReference type="RefSeq" id="WP_011655958.1">
    <property type="nucleotide sequence ID" value="NC_008390.1"/>
</dbReference>
<dbReference type="SMR" id="Q0BIB5"/>
<dbReference type="GeneID" id="93084035"/>
<dbReference type="KEGG" id="bam:Bamb_0549"/>
<dbReference type="PATRIC" id="fig|339670.21.peg.1053"/>
<dbReference type="eggNOG" id="COG0495">
    <property type="taxonomic scope" value="Bacteria"/>
</dbReference>
<dbReference type="Proteomes" id="UP000000662">
    <property type="component" value="Chromosome 1"/>
</dbReference>
<dbReference type="GO" id="GO:0005829">
    <property type="term" value="C:cytosol"/>
    <property type="evidence" value="ECO:0007669"/>
    <property type="project" value="TreeGrafter"/>
</dbReference>
<dbReference type="GO" id="GO:0002161">
    <property type="term" value="F:aminoacyl-tRNA deacylase activity"/>
    <property type="evidence" value="ECO:0007669"/>
    <property type="project" value="InterPro"/>
</dbReference>
<dbReference type="GO" id="GO:0005524">
    <property type="term" value="F:ATP binding"/>
    <property type="evidence" value="ECO:0007669"/>
    <property type="project" value="UniProtKB-UniRule"/>
</dbReference>
<dbReference type="GO" id="GO:0004823">
    <property type="term" value="F:leucine-tRNA ligase activity"/>
    <property type="evidence" value="ECO:0007669"/>
    <property type="project" value="UniProtKB-UniRule"/>
</dbReference>
<dbReference type="GO" id="GO:0006429">
    <property type="term" value="P:leucyl-tRNA aminoacylation"/>
    <property type="evidence" value="ECO:0007669"/>
    <property type="project" value="UniProtKB-UniRule"/>
</dbReference>
<dbReference type="CDD" id="cd07958">
    <property type="entry name" value="Anticodon_Ia_Leu_BEm"/>
    <property type="match status" value="1"/>
</dbReference>
<dbReference type="CDD" id="cd00812">
    <property type="entry name" value="LeuRS_core"/>
    <property type="match status" value="1"/>
</dbReference>
<dbReference type="FunFam" id="1.10.730.10:FF:000002">
    <property type="entry name" value="Leucine--tRNA ligase"/>
    <property type="match status" value="1"/>
</dbReference>
<dbReference type="FunFam" id="2.20.28.290:FF:000001">
    <property type="entry name" value="Leucine--tRNA ligase"/>
    <property type="match status" value="1"/>
</dbReference>
<dbReference type="FunFam" id="3.10.20.590:FF:000001">
    <property type="entry name" value="Leucine--tRNA ligase"/>
    <property type="match status" value="1"/>
</dbReference>
<dbReference type="FunFam" id="3.40.50.620:FF:000003">
    <property type="entry name" value="Leucine--tRNA ligase"/>
    <property type="match status" value="1"/>
</dbReference>
<dbReference type="FunFam" id="3.40.50.620:FF:000056">
    <property type="entry name" value="Leucine--tRNA ligase"/>
    <property type="match status" value="1"/>
</dbReference>
<dbReference type="FunFam" id="3.90.740.10:FF:000012">
    <property type="entry name" value="Leucine--tRNA ligase"/>
    <property type="match status" value="1"/>
</dbReference>
<dbReference type="Gene3D" id="2.20.28.290">
    <property type="match status" value="1"/>
</dbReference>
<dbReference type="Gene3D" id="3.10.20.590">
    <property type="match status" value="1"/>
</dbReference>
<dbReference type="Gene3D" id="3.40.50.620">
    <property type="entry name" value="HUPs"/>
    <property type="match status" value="2"/>
</dbReference>
<dbReference type="Gene3D" id="1.10.730.10">
    <property type="entry name" value="Isoleucyl-tRNA Synthetase, Domain 1"/>
    <property type="match status" value="1"/>
</dbReference>
<dbReference type="HAMAP" id="MF_00049_B">
    <property type="entry name" value="Leu_tRNA_synth_B"/>
    <property type="match status" value="1"/>
</dbReference>
<dbReference type="InterPro" id="IPR001412">
    <property type="entry name" value="aa-tRNA-synth_I_CS"/>
</dbReference>
<dbReference type="InterPro" id="IPR002300">
    <property type="entry name" value="aa-tRNA-synth_Ia"/>
</dbReference>
<dbReference type="InterPro" id="IPR002302">
    <property type="entry name" value="Leu-tRNA-ligase"/>
</dbReference>
<dbReference type="InterPro" id="IPR025709">
    <property type="entry name" value="Leu_tRNA-synth_edit"/>
</dbReference>
<dbReference type="InterPro" id="IPR013155">
    <property type="entry name" value="M/V/L/I-tRNA-synth_anticd-bd"/>
</dbReference>
<dbReference type="InterPro" id="IPR015413">
    <property type="entry name" value="Methionyl/Leucyl_tRNA_Synth"/>
</dbReference>
<dbReference type="InterPro" id="IPR014729">
    <property type="entry name" value="Rossmann-like_a/b/a_fold"/>
</dbReference>
<dbReference type="InterPro" id="IPR009080">
    <property type="entry name" value="tRNAsynth_Ia_anticodon-bd"/>
</dbReference>
<dbReference type="InterPro" id="IPR009008">
    <property type="entry name" value="Val/Leu/Ile-tRNA-synth_edit"/>
</dbReference>
<dbReference type="NCBIfam" id="TIGR00396">
    <property type="entry name" value="leuS_bact"/>
    <property type="match status" value="1"/>
</dbReference>
<dbReference type="PANTHER" id="PTHR43740:SF2">
    <property type="entry name" value="LEUCINE--TRNA LIGASE, MITOCHONDRIAL"/>
    <property type="match status" value="1"/>
</dbReference>
<dbReference type="PANTHER" id="PTHR43740">
    <property type="entry name" value="LEUCYL-TRNA SYNTHETASE"/>
    <property type="match status" value="1"/>
</dbReference>
<dbReference type="Pfam" id="PF08264">
    <property type="entry name" value="Anticodon_1"/>
    <property type="match status" value="1"/>
</dbReference>
<dbReference type="Pfam" id="PF00133">
    <property type="entry name" value="tRNA-synt_1"/>
    <property type="match status" value="2"/>
</dbReference>
<dbReference type="Pfam" id="PF13603">
    <property type="entry name" value="tRNA-synt_1_2"/>
    <property type="match status" value="1"/>
</dbReference>
<dbReference type="Pfam" id="PF09334">
    <property type="entry name" value="tRNA-synt_1g"/>
    <property type="match status" value="1"/>
</dbReference>
<dbReference type="PRINTS" id="PR00985">
    <property type="entry name" value="TRNASYNTHLEU"/>
</dbReference>
<dbReference type="SUPFAM" id="SSF47323">
    <property type="entry name" value="Anticodon-binding domain of a subclass of class I aminoacyl-tRNA synthetases"/>
    <property type="match status" value="1"/>
</dbReference>
<dbReference type="SUPFAM" id="SSF52374">
    <property type="entry name" value="Nucleotidylyl transferase"/>
    <property type="match status" value="1"/>
</dbReference>
<dbReference type="SUPFAM" id="SSF50677">
    <property type="entry name" value="ValRS/IleRS/LeuRS editing domain"/>
    <property type="match status" value="1"/>
</dbReference>
<dbReference type="PROSITE" id="PS00178">
    <property type="entry name" value="AA_TRNA_LIGASE_I"/>
    <property type="match status" value="1"/>
</dbReference>
<organism>
    <name type="scientific">Burkholderia ambifaria (strain ATCC BAA-244 / DSM 16087 / CCUG 44356 / LMG 19182 / AMMD)</name>
    <name type="common">Burkholderia cepacia (strain AMMD)</name>
    <dbReference type="NCBI Taxonomy" id="339670"/>
    <lineage>
        <taxon>Bacteria</taxon>
        <taxon>Pseudomonadati</taxon>
        <taxon>Pseudomonadota</taxon>
        <taxon>Betaproteobacteria</taxon>
        <taxon>Burkholderiales</taxon>
        <taxon>Burkholderiaceae</taxon>
        <taxon>Burkholderia</taxon>
        <taxon>Burkholderia cepacia complex</taxon>
    </lineage>
</organism>
<feature type="chain" id="PRO_1000009306" description="Leucine--tRNA ligase">
    <location>
        <begin position="1"/>
        <end position="864"/>
    </location>
</feature>
<feature type="short sequence motif" description="'HIGH' region">
    <location>
        <begin position="42"/>
        <end position="52"/>
    </location>
</feature>
<feature type="short sequence motif" description="'KMSKS' region">
    <location>
        <begin position="624"/>
        <end position="628"/>
    </location>
</feature>
<feature type="binding site" evidence="1">
    <location>
        <position position="627"/>
    </location>
    <ligand>
        <name>ATP</name>
        <dbReference type="ChEBI" id="CHEBI:30616"/>
    </ligand>
</feature>
<gene>
    <name evidence="1" type="primary">leuS</name>
    <name type="ordered locus">Bamb_0549</name>
</gene>
<keyword id="KW-0030">Aminoacyl-tRNA synthetase</keyword>
<keyword id="KW-0067">ATP-binding</keyword>
<keyword id="KW-0963">Cytoplasm</keyword>
<keyword id="KW-0436">Ligase</keyword>
<keyword id="KW-0547">Nucleotide-binding</keyword>
<keyword id="KW-0648">Protein biosynthesis</keyword>
<evidence type="ECO:0000255" key="1">
    <source>
        <dbReference type="HAMAP-Rule" id="MF_00049"/>
    </source>
</evidence>
<accession>Q0BIB5</accession>